<protein>
    <recommendedName>
        <fullName>F-box/LRR-repeat protein 12</fullName>
    </recommendedName>
    <alternativeName>
        <fullName>F-box and leucine-rich repeat protein 12</fullName>
    </alternativeName>
</protein>
<sequence length="326" mass="37126">MATFADLPDSVLLEIFSYLPVRDRIRISRVCHHWKKLVDDRWLWRHVDLTLYTMRPKVMWHLLRRYMASRLHSLRMGGYLFSGSQAPQLSPALMRALGQKCPNLKRLCLHVANLSMVPITSLPCTLRTLELHSCEISMAWLHKEQDPTVLPLLECIVLDRVPAFRDEHLQGLTRFRALRSLVLGGTYRVTETGLDMGLQELNYLQRLEVLGCTLSADSTLLAISRHLRDVRKIRLTVRGLSAPGLSVLEGMPALESLCLLGPLVTPEMPSPQEILASCLTMPKLRVLELQGLGWEGQEAERILSKGLPHCMVIVRALPKESMDWWM</sequence>
<organism>
    <name type="scientific">Bos taurus</name>
    <name type="common">Bovine</name>
    <dbReference type="NCBI Taxonomy" id="9913"/>
    <lineage>
        <taxon>Eukaryota</taxon>
        <taxon>Metazoa</taxon>
        <taxon>Chordata</taxon>
        <taxon>Craniata</taxon>
        <taxon>Vertebrata</taxon>
        <taxon>Euteleostomi</taxon>
        <taxon>Mammalia</taxon>
        <taxon>Eutheria</taxon>
        <taxon>Laurasiatheria</taxon>
        <taxon>Artiodactyla</taxon>
        <taxon>Ruminantia</taxon>
        <taxon>Pecora</taxon>
        <taxon>Bovidae</taxon>
        <taxon>Bovinae</taxon>
        <taxon>Bos</taxon>
    </lineage>
</organism>
<proteinExistence type="evidence at transcript level"/>
<dbReference type="EMBL" id="BC108120">
    <property type="protein sequence ID" value="AAI08121.1"/>
    <property type="molecule type" value="mRNA"/>
</dbReference>
<dbReference type="RefSeq" id="NP_001035690.1">
    <property type="nucleotide sequence ID" value="NM_001040600.2"/>
</dbReference>
<dbReference type="SMR" id="Q32PG9"/>
<dbReference type="FunCoup" id="Q32PG9">
    <property type="interactions" value="2285"/>
</dbReference>
<dbReference type="STRING" id="9913.ENSBTAP00000035085"/>
<dbReference type="PaxDb" id="9913-ENSBTAP00000035085"/>
<dbReference type="Ensembl" id="ENSBTAT00000035207.5">
    <property type="protein sequence ID" value="ENSBTAP00000035085.4"/>
    <property type="gene ID" value="ENSBTAG00000025148.5"/>
</dbReference>
<dbReference type="GeneID" id="617304"/>
<dbReference type="KEGG" id="bta:617304"/>
<dbReference type="CTD" id="54850"/>
<dbReference type="VEuPathDB" id="HostDB:ENSBTAG00000025148"/>
<dbReference type="VGNC" id="VGNC:52772">
    <property type="gene designation" value="FBXL12"/>
</dbReference>
<dbReference type="eggNOG" id="KOG1947">
    <property type="taxonomic scope" value="Eukaryota"/>
</dbReference>
<dbReference type="GeneTree" id="ENSGT00390000003354"/>
<dbReference type="InParanoid" id="Q32PG9"/>
<dbReference type="OMA" id="RGLPHCM"/>
<dbReference type="OrthoDB" id="3219396at2759"/>
<dbReference type="Reactome" id="R-BTA-8951664">
    <property type="pathway name" value="Neddylation"/>
</dbReference>
<dbReference type="Reactome" id="R-BTA-983168">
    <property type="pathway name" value="Antigen processing: Ubiquitination &amp; Proteasome degradation"/>
</dbReference>
<dbReference type="UniPathway" id="UPA00143"/>
<dbReference type="Proteomes" id="UP000009136">
    <property type="component" value="Chromosome 7"/>
</dbReference>
<dbReference type="Bgee" id="ENSBTAG00000025148">
    <property type="expression patterns" value="Expressed in thymus and 103 other cell types or tissues"/>
</dbReference>
<dbReference type="GO" id="GO:0016567">
    <property type="term" value="P:protein ubiquitination"/>
    <property type="evidence" value="ECO:0007669"/>
    <property type="project" value="UniProtKB-UniPathway"/>
</dbReference>
<dbReference type="FunFam" id="3.80.10.10:FF:000208">
    <property type="entry name" value="F-box/LRR-repeat protein 12 isoform X1"/>
    <property type="match status" value="1"/>
</dbReference>
<dbReference type="Gene3D" id="3.80.10.10">
    <property type="entry name" value="Ribonuclease Inhibitor"/>
    <property type="match status" value="1"/>
</dbReference>
<dbReference type="InterPro" id="IPR036047">
    <property type="entry name" value="F-box-like_dom_sf"/>
</dbReference>
<dbReference type="InterPro" id="IPR001810">
    <property type="entry name" value="F-box_dom"/>
</dbReference>
<dbReference type="InterPro" id="IPR032675">
    <property type="entry name" value="LRR_dom_sf"/>
</dbReference>
<dbReference type="PANTHER" id="PTHR16134">
    <property type="entry name" value="F-BOX/TPR REPEAT PROTEIN POF3"/>
    <property type="match status" value="1"/>
</dbReference>
<dbReference type="PANTHER" id="PTHR16134:SF153">
    <property type="entry name" value="F-BOX_LRR-REPEAT PROTEIN 12"/>
    <property type="match status" value="1"/>
</dbReference>
<dbReference type="Pfam" id="PF12937">
    <property type="entry name" value="F-box-like"/>
    <property type="match status" value="1"/>
</dbReference>
<dbReference type="SMART" id="SM00256">
    <property type="entry name" value="FBOX"/>
    <property type="match status" value="1"/>
</dbReference>
<dbReference type="SUPFAM" id="SSF81383">
    <property type="entry name" value="F-box domain"/>
    <property type="match status" value="1"/>
</dbReference>
<dbReference type="SUPFAM" id="SSF52047">
    <property type="entry name" value="RNI-like"/>
    <property type="match status" value="1"/>
</dbReference>
<dbReference type="PROSITE" id="PS50181">
    <property type="entry name" value="FBOX"/>
    <property type="match status" value="1"/>
</dbReference>
<name>FXL12_BOVIN</name>
<reference key="1">
    <citation type="submission" date="2005-10" db="EMBL/GenBank/DDBJ databases">
        <authorList>
            <consortium name="NIH - Mammalian Gene Collection (MGC) project"/>
        </authorList>
    </citation>
    <scope>NUCLEOTIDE SEQUENCE [LARGE SCALE MRNA]</scope>
    <source>
        <strain>Hereford</strain>
        <tissue>Thymus</tissue>
    </source>
</reference>
<accession>Q32PG9</accession>
<evidence type="ECO:0000250" key="1"/>
<evidence type="ECO:0000255" key="2">
    <source>
        <dbReference type="PROSITE-ProRule" id="PRU00080"/>
    </source>
</evidence>
<feature type="chain" id="PRO_0000259959" description="F-box/LRR-repeat protein 12">
    <location>
        <begin position="1"/>
        <end position="326"/>
    </location>
</feature>
<feature type="domain" description="F-box" evidence="2">
    <location>
        <begin position="1"/>
        <end position="47"/>
    </location>
</feature>
<feature type="repeat" description="LRR 1">
    <location>
        <begin position="51"/>
        <end position="78"/>
    </location>
</feature>
<feature type="repeat" description="LRR 2">
    <location>
        <begin position="86"/>
        <end position="111"/>
    </location>
</feature>
<feature type="repeat" description="LRR 3">
    <location>
        <begin position="161"/>
        <end position="185"/>
    </location>
</feature>
<feature type="repeat" description="LRR 4">
    <location>
        <begin position="186"/>
        <end position="211"/>
    </location>
</feature>
<feature type="repeat" description="LRR 5">
    <location>
        <begin position="212"/>
        <end position="236"/>
    </location>
</feature>
<feature type="repeat" description="LRR 6">
    <location>
        <begin position="237"/>
        <end position="261"/>
    </location>
</feature>
<feature type="repeat" description="LRR 7">
    <location>
        <begin position="266"/>
        <end position="291"/>
    </location>
</feature>
<gene>
    <name type="primary">FBXL12</name>
</gene>
<keyword id="KW-0433">Leucine-rich repeat</keyword>
<keyword id="KW-1185">Reference proteome</keyword>
<keyword id="KW-0677">Repeat</keyword>
<keyword id="KW-0833">Ubl conjugation pathway</keyword>
<comment type="function">
    <text evidence="1">Substrate-recognition component of the SCF (SKP1-CUL1-F-box protein)-type E3 ubiquitin ligase complex. Mediates the polyubiquitination and proteasomal degradation of CAMK1 leading to disruption of cyclin D1/CDK4 complex assembly which results in G1 cell cycle arrest in lung epithelia (By similarity).</text>
</comment>
<comment type="pathway">
    <text>Protein modification; protein ubiquitination.</text>
</comment>
<comment type="subunit">
    <text evidence="1">Interacts with SKP1 and CUL1.</text>
</comment>